<accession>Q1MND6</accession>
<evidence type="ECO:0000255" key="1">
    <source>
        <dbReference type="HAMAP-Rule" id="MF_00133"/>
    </source>
</evidence>
<name>TRPB_RHIJ3</name>
<dbReference type="EC" id="4.2.1.20" evidence="1"/>
<dbReference type="EMBL" id="AM236080">
    <property type="protein sequence ID" value="CAK05509.1"/>
    <property type="molecule type" value="Genomic_DNA"/>
</dbReference>
<dbReference type="RefSeq" id="WP_011649851.1">
    <property type="nucleotide sequence ID" value="NC_008380.1"/>
</dbReference>
<dbReference type="SMR" id="Q1MND6"/>
<dbReference type="EnsemblBacteria" id="CAK05509">
    <property type="protein sequence ID" value="CAK05509"/>
    <property type="gene ID" value="RL0021"/>
</dbReference>
<dbReference type="KEGG" id="rle:RL0021"/>
<dbReference type="eggNOG" id="COG0133">
    <property type="taxonomic scope" value="Bacteria"/>
</dbReference>
<dbReference type="HOGENOM" id="CLU_016734_3_1_5"/>
<dbReference type="UniPathway" id="UPA00035">
    <property type="reaction ID" value="UER00044"/>
</dbReference>
<dbReference type="Proteomes" id="UP000006575">
    <property type="component" value="Chromosome"/>
</dbReference>
<dbReference type="GO" id="GO:0005737">
    <property type="term" value="C:cytoplasm"/>
    <property type="evidence" value="ECO:0007669"/>
    <property type="project" value="TreeGrafter"/>
</dbReference>
<dbReference type="GO" id="GO:0004834">
    <property type="term" value="F:tryptophan synthase activity"/>
    <property type="evidence" value="ECO:0007669"/>
    <property type="project" value="UniProtKB-UniRule"/>
</dbReference>
<dbReference type="CDD" id="cd06446">
    <property type="entry name" value="Trp-synth_B"/>
    <property type="match status" value="1"/>
</dbReference>
<dbReference type="FunFam" id="3.40.50.1100:FF:000001">
    <property type="entry name" value="Tryptophan synthase beta chain"/>
    <property type="match status" value="1"/>
</dbReference>
<dbReference type="FunFam" id="3.40.50.1100:FF:000004">
    <property type="entry name" value="Tryptophan synthase beta chain"/>
    <property type="match status" value="1"/>
</dbReference>
<dbReference type="Gene3D" id="3.40.50.1100">
    <property type="match status" value="2"/>
</dbReference>
<dbReference type="HAMAP" id="MF_00133">
    <property type="entry name" value="Trp_synth_beta"/>
    <property type="match status" value="1"/>
</dbReference>
<dbReference type="InterPro" id="IPR006653">
    <property type="entry name" value="Trp_synth_b_CS"/>
</dbReference>
<dbReference type="InterPro" id="IPR006654">
    <property type="entry name" value="Trp_synth_beta"/>
</dbReference>
<dbReference type="InterPro" id="IPR023026">
    <property type="entry name" value="Trp_synth_beta/beta-like"/>
</dbReference>
<dbReference type="InterPro" id="IPR001926">
    <property type="entry name" value="TrpB-like_PALP"/>
</dbReference>
<dbReference type="InterPro" id="IPR036052">
    <property type="entry name" value="TrpB-like_PALP_sf"/>
</dbReference>
<dbReference type="NCBIfam" id="TIGR00263">
    <property type="entry name" value="trpB"/>
    <property type="match status" value="1"/>
</dbReference>
<dbReference type="PANTHER" id="PTHR48077:SF3">
    <property type="entry name" value="TRYPTOPHAN SYNTHASE"/>
    <property type="match status" value="1"/>
</dbReference>
<dbReference type="PANTHER" id="PTHR48077">
    <property type="entry name" value="TRYPTOPHAN SYNTHASE-RELATED"/>
    <property type="match status" value="1"/>
</dbReference>
<dbReference type="Pfam" id="PF00291">
    <property type="entry name" value="PALP"/>
    <property type="match status" value="1"/>
</dbReference>
<dbReference type="PIRSF" id="PIRSF001413">
    <property type="entry name" value="Trp_syn_beta"/>
    <property type="match status" value="1"/>
</dbReference>
<dbReference type="SUPFAM" id="SSF53686">
    <property type="entry name" value="Tryptophan synthase beta subunit-like PLP-dependent enzymes"/>
    <property type="match status" value="1"/>
</dbReference>
<dbReference type="PROSITE" id="PS00168">
    <property type="entry name" value="TRP_SYNTHASE_BETA"/>
    <property type="match status" value="1"/>
</dbReference>
<organism>
    <name type="scientific">Rhizobium johnstonii (strain DSM 114642 / LMG 32736 / 3841)</name>
    <name type="common">Rhizobium leguminosarum bv. viciae</name>
    <dbReference type="NCBI Taxonomy" id="216596"/>
    <lineage>
        <taxon>Bacteria</taxon>
        <taxon>Pseudomonadati</taxon>
        <taxon>Pseudomonadota</taxon>
        <taxon>Alphaproteobacteria</taxon>
        <taxon>Hyphomicrobiales</taxon>
        <taxon>Rhizobiaceae</taxon>
        <taxon>Rhizobium/Agrobacterium group</taxon>
        <taxon>Rhizobium</taxon>
        <taxon>Rhizobium johnstonii</taxon>
    </lineage>
</organism>
<comment type="function">
    <text evidence="1">The beta subunit is responsible for the synthesis of L-tryptophan from indole and L-serine.</text>
</comment>
<comment type="catalytic activity">
    <reaction evidence="1">
        <text>(1S,2R)-1-C-(indol-3-yl)glycerol 3-phosphate + L-serine = D-glyceraldehyde 3-phosphate + L-tryptophan + H2O</text>
        <dbReference type="Rhea" id="RHEA:10532"/>
        <dbReference type="ChEBI" id="CHEBI:15377"/>
        <dbReference type="ChEBI" id="CHEBI:33384"/>
        <dbReference type="ChEBI" id="CHEBI:57912"/>
        <dbReference type="ChEBI" id="CHEBI:58866"/>
        <dbReference type="ChEBI" id="CHEBI:59776"/>
        <dbReference type="EC" id="4.2.1.20"/>
    </reaction>
</comment>
<comment type="cofactor">
    <cofactor evidence="1">
        <name>pyridoxal 5'-phosphate</name>
        <dbReference type="ChEBI" id="CHEBI:597326"/>
    </cofactor>
</comment>
<comment type="pathway">
    <text evidence="1">Amino-acid biosynthesis; L-tryptophan biosynthesis; L-tryptophan from chorismate: step 5/5.</text>
</comment>
<comment type="subunit">
    <text evidence="1">Tetramer of two alpha and two beta chains.</text>
</comment>
<comment type="similarity">
    <text evidence="1">Belongs to the TrpB family.</text>
</comment>
<keyword id="KW-0028">Amino-acid biosynthesis</keyword>
<keyword id="KW-0057">Aromatic amino acid biosynthesis</keyword>
<keyword id="KW-0456">Lyase</keyword>
<keyword id="KW-0663">Pyridoxal phosphate</keyword>
<keyword id="KW-0822">Tryptophan biosynthesis</keyword>
<sequence length="406" mass="43719">MNETPKPNSFRSGPDEDGRFGIYGGRFVAETLMPLILDLQDEWNRAKNDPAFQAELKHLGAHYIGRPSPLYFAERLTAELGGAKIYFKREELNHTGSHKINNCIGQILLAKRMGKTRIIAETGAGQHGVASATVAARFGLPCVVYMGATDVERQAPNVFRMKLLGAEVKPVTAGSGTLKDAMNEALRDWVTNVEDTYYLIGTAAGPHPYPEMVRDFQSVIGIEAKEQMLAAEGRLPDLVIAAVGGGSNAIGIFHPFLDDPSVKIVGVEAGGKGLQGDEHCASITAGSPGVLHGNRTYLLQDSDGQIKEGHSISAGLDYPGIGPEHSWLNDTGRVDYVPIMDHEALEAFQTLTRLEGIIPALEPSHAIAEVIKRAPTMGKDEIILMNLSGRGDKDIFTVGKILGMGL</sequence>
<gene>
    <name evidence="1" type="primary">trpB</name>
    <name type="ordered locus">RL0021</name>
</gene>
<reference key="1">
    <citation type="journal article" date="2006" name="Genome Biol.">
        <title>The genome of Rhizobium leguminosarum has recognizable core and accessory components.</title>
        <authorList>
            <person name="Young J.P.W."/>
            <person name="Crossman L.C."/>
            <person name="Johnston A.W.B."/>
            <person name="Thomson N.R."/>
            <person name="Ghazoui Z.F."/>
            <person name="Hull K.H."/>
            <person name="Wexler M."/>
            <person name="Curson A.R.J."/>
            <person name="Todd J.D."/>
            <person name="Poole P.S."/>
            <person name="Mauchline T.H."/>
            <person name="East A.K."/>
            <person name="Quail M.A."/>
            <person name="Churcher C."/>
            <person name="Arrowsmith C."/>
            <person name="Cherevach I."/>
            <person name="Chillingworth T."/>
            <person name="Clarke K."/>
            <person name="Cronin A."/>
            <person name="Davis P."/>
            <person name="Fraser A."/>
            <person name="Hance Z."/>
            <person name="Hauser H."/>
            <person name="Jagels K."/>
            <person name="Moule S."/>
            <person name="Mungall K."/>
            <person name="Norbertczak H."/>
            <person name="Rabbinowitsch E."/>
            <person name="Sanders M."/>
            <person name="Simmonds M."/>
            <person name="Whitehead S."/>
            <person name="Parkhill J."/>
        </authorList>
    </citation>
    <scope>NUCLEOTIDE SEQUENCE [LARGE SCALE GENOMIC DNA]</scope>
    <source>
        <strain>DSM 114642 / LMG 32736 / 3841</strain>
    </source>
</reference>
<protein>
    <recommendedName>
        <fullName evidence="1">Tryptophan synthase beta chain</fullName>
        <ecNumber evidence="1">4.2.1.20</ecNumber>
    </recommendedName>
</protein>
<proteinExistence type="inferred from homology"/>
<feature type="chain" id="PRO_1000018381" description="Tryptophan synthase beta chain">
    <location>
        <begin position="1"/>
        <end position="406"/>
    </location>
</feature>
<feature type="modified residue" description="N6-(pyridoxal phosphate)lysine" evidence="1">
    <location>
        <position position="99"/>
    </location>
</feature>